<name>CCP41_ORYSJ</name>
<comment type="similarity">
    <text evidence="1">Belongs to the cyclin family. Cyclin U/P subfamily.</text>
</comment>
<feature type="chain" id="PRO_0000287067" description="Cyclin-P4-1">
    <location>
        <begin position="1"/>
        <end position="212"/>
    </location>
</feature>
<gene>
    <name type="primary">CYCP4-1</name>
    <name type="ordered locus">Os10g0563900</name>
    <name type="ordered locus">LOC_Os10g41430</name>
    <name type="ORF">OsJ_031206</name>
    <name type="ORF">OSJNBa0027P10.16</name>
</gene>
<keyword id="KW-0131">Cell cycle</keyword>
<keyword id="KW-0132">Cell division</keyword>
<keyword id="KW-0195">Cyclin</keyword>
<keyword id="KW-1185">Reference proteome</keyword>
<reference key="1">
    <citation type="journal article" date="2003" name="Science">
        <title>In-depth view of structure, activity, and evolution of rice chromosome 10.</title>
        <authorList>
            <person name="Yu Y."/>
            <person name="Rambo T."/>
            <person name="Currie J."/>
            <person name="Saski C."/>
            <person name="Kim H.-R."/>
            <person name="Collura K."/>
            <person name="Thompson S."/>
            <person name="Simmons J."/>
            <person name="Yang T.-J."/>
            <person name="Nah G."/>
            <person name="Patel A.J."/>
            <person name="Thurmond S."/>
            <person name="Henry D."/>
            <person name="Oates R."/>
            <person name="Palmer M."/>
            <person name="Pries G."/>
            <person name="Gibson J."/>
            <person name="Anderson H."/>
            <person name="Paradkar M."/>
            <person name="Crane L."/>
            <person name="Dale J."/>
            <person name="Carver M.B."/>
            <person name="Wood T."/>
            <person name="Frisch D."/>
            <person name="Engler F."/>
            <person name="Soderlund C."/>
            <person name="Palmer L.E."/>
            <person name="Teytelman L."/>
            <person name="Nascimento L."/>
            <person name="De la Bastide M."/>
            <person name="Spiegel L."/>
            <person name="Ware D."/>
            <person name="O'Shaughnessy A."/>
            <person name="Dike S."/>
            <person name="Dedhia N."/>
            <person name="Preston R."/>
            <person name="Huang E."/>
            <person name="Ferraro K."/>
            <person name="Kuit K."/>
            <person name="Miller B."/>
            <person name="Zutavern T."/>
            <person name="Katzenberger F."/>
            <person name="Muller S."/>
            <person name="Balija V."/>
            <person name="Martienssen R.A."/>
            <person name="Stein L."/>
            <person name="Minx P."/>
            <person name="Johnson D."/>
            <person name="Cordum H."/>
            <person name="Mardis E."/>
            <person name="Cheng Z."/>
            <person name="Jiang J."/>
            <person name="Wilson R."/>
            <person name="McCombie W.R."/>
            <person name="Wing R.A."/>
            <person name="Yuan Q."/>
            <person name="Ouyang S."/>
            <person name="Liu J."/>
            <person name="Jones K.M."/>
            <person name="Gansberger K."/>
            <person name="Moffat K."/>
            <person name="Hill J."/>
            <person name="Tsitrin T."/>
            <person name="Overton L."/>
            <person name="Bera J."/>
            <person name="Kim M."/>
            <person name="Jin S."/>
            <person name="Tallon L."/>
            <person name="Ciecko A."/>
            <person name="Pai G."/>
            <person name="Van Aken S."/>
            <person name="Utterback T."/>
            <person name="Reidmuller S."/>
            <person name="Bormann J."/>
            <person name="Feldblyum T."/>
            <person name="Hsiao J."/>
            <person name="Zismann V."/>
            <person name="Blunt S."/>
            <person name="de Vazeille A.R."/>
            <person name="Shaffer T."/>
            <person name="Koo H."/>
            <person name="Suh B."/>
            <person name="Yang Q."/>
            <person name="Haas B."/>
            <person name="Peterson J."/>
            <person name="Pertea M."/>
            <person name="Volfovsky N."/>
            <person name="Wortman J."/>
            <person name="White O."/>
            <person name="Salzberg S.L."/>
            <person name="Fraser C.M."/>
            <person name="Buell C.R."/>
            <person name="Messing J."/>
            <person name="Song R."/>
            <person name="Fuks G."/>
            <person name="Llaca V."/>
            <person name="Kovchak S."/>
            <person name="Young S."/>
            <person name="Bowers J.E."/>
            <person name="Paterson A.H."/>
            <person name="Johns M.A."/>
            <person name="Mao L."/>
            <person name="Pan H."/>
            <person name="Dean R.A."/>
        </authorList>
    </citation>
    <scope>NUCLEOTIDE SEQUENCE [LARGE SCALE GENOMIC DNA]</scope>
    <source>
        <strain>cv. Nipponbare</strain>
    </source>
</reference>
<reference key="2">
    <citation type="journal article" date="2005" name="Nature">
        <title>The map-based sequence of the rice genome.</title>
        <authorList>
            <consortium name="International rice genome sequencing project (IRGSP)"/>
        </authorList>
    </citation>
    <scope>NUCLEOTIDE SEQUENCE [LARGE SCALE GENOMIC DNA]</scope>
    <source>
        <strain>cv. Nipponbare</strain>
    </source>
</reference>
<reference key="3">
    <citation type="journal article" date="2008" name="Nucleic Acids Res.">
        <title>The rice annotation project database (RAP-DB): 2008 update.</title>
        <authorList>
            <consortium name="The rice annotation project (RAP)"/>
        </authorList>
    </citation>
    <scope>GENOME REANNOTATION</scope>
    <source>
        <strain>cv. Nipponbare</strain>
    </source>
</reference>
<reference key="4">
    <citation type="journal article" date="2013" name="Rice">
        <title>Improvement of the Oryza sativa Nipponbare reference genome using next generation sequence and optical map data.</title>
        <authorList>
            <person name="Kawahara Y."/>
            <person name="de la Bastide M."/>
            <person name="Hamilton J.P."/>
            <person name="Kanamori H."/>
            <person name="McCombie W.R."/>
            <person name="Ouyang S."/>
            <person name="Schwartz D.C."/>
            <person name="Tanaka T."/>
            <person name="Wu J."/>
            <person name="Zhou S."/>
            <person name="Childs K.L."/>
            <person name="Davidson R.M."/>
            <person name="Lin H."/>
            <person name="Quesada-Ocampo L."/>
            <person name="Vaillancourt B."/>
            <person name="Sakai H."/>
            <person name="Lee S.S."/>
            <person name="Kim J."/>
            <person name="Numa H."/>
            <person name="Itoh T."/>
            <person name="Buell C.R."/>
            <person name="Matsumoto T."/>
        </authorList>
    </citation>
    <scope>GENOME REANNOTATION</scope>
    <source>
        <strain>cv. Nipponbare</strain>
    </source>
</reference>
<reference key="5">
    <citation type="journal article" date="2005" name="PLoS Biol.">
        <title>The genomes of Oryza sativa: a history of duplications.</title>
        <authorList>
            <person name="Yu J."/>
            <person name="Wang J."/>
            <person name="Lin W."/>
            <person name="Li S."/>
            <person name="Li H."/>
            <person name="Zhou J."/>
            <person name="Ni P."/>
            <person name="Dong W."/>
            <person name="Hu S."/>
            <person name="Zeng C."/>
            <person name="Zhang J."/>
            <person name="Zhang Y."/>
            <person name="Li R."/>
            <person name="Xu Z."/>
            <person name="Li S."/>
            <person name="Li X."/>
            <person name="Zheng H."/>
            <person name="Cong L."/>
            <person name="Lin L."/>
            <person name="Yin J."/>
            <person name="Geng J."/>
            <person name="Li G."/>
            <person name="Shi J."/>
            <person name="Liu J."/>
            <person name="Lv H."/>
            <person name="Li J."/>
            <person name="Wang J."/>
            <person name="Deng Y."/>
            <person name="Ran L."/>
            <person name="Shi X."/>
            <person name="Wang X."/>
            <person name="Wu Q."/>
            <person name="Li C."/>
            <person name="Ren X."/>
            <person name="Wang J."/>
            <person name="Wang X."/>
            <person name="Li D."/>
            <person name="Liu D."/>
            <person name="Zhang X."/>
            <person name="Ji Z."/>
            <person name="Zhao W."/>
            <person name="Sun Y."/>
            <person name="Zhang Z."/>
            <person name="Bao J."/>
            <person name="Han Y."/>
            <person name="Dong L."/>
            <person name="Ji J."/>
            <person name="Chen P."/>
            <person name="Wu S."/>
            <person name="Liu J."/>
            <person name="Xiao Y."/>
            <person name="Bu D."/>
            <person name="Tan J."/>
            <person name="Yang L."/>
            <person name="Ye C."/>
            <person name="Zhang J."/>
            <person name="Xu J."/>
            <person name="Zhou Y."/>
            <person name="Yu Y."/>
            <person name="Zhang B."/>
            <person name="Zhuang S."/>
            <person name="Wei H."/>
            <person name="Liu B."/>
            <person name="Lei M."/>
            <person name="Yu H."/>
            <person name="Li Y."/>
            <person name="Xu H."/>
            <person name="Wei S."/>
            <person name="He X."/>
            <person name="Fang L."/>
            <person name="Zhang Z."/>
            <person name="Zhang Y."/>
            <person name="Huang X."/>
            <person name="Su Z."/>
            <person name="Tong W."/>
            <person name="Li J."/>
            <person name="Tong Z."/>
            <person name="Li S."/>
            <person name="Ye J."/>
            <person name="Wang L."/>
            <person name="Fang L."/>
            <person name="Lei T."/>
            <person name="Chen C.-S."/>
            <person name="Chen H.-C."/>
            <person name="Xu Z."/>
            <person name="Li H."/>
            <person name="Huang H."/>
            <person name="Zhang F."/>
            <person name="Xu H."/>
            <person name="Li N."/>
            <person name="Zhao C."/>
            <person name="Li S."/>
            <person name="Dong L."/>
            <person name="Huang Y."/>
            <person name="Li L."/>
            <person name="Xi Y."/>
            <person name="Qi Q."/>
            <person name="Li W."/>
            <person name="Zhang B."/>
            <person name="Hu W."/>
            <person name="Zhang Y."/>
            <person name="Tian X."/>
            <person name="Jiao Y."/>
            <person name="Liang X."/>
            <person name="Jin J."/>
            <person name="Gao L."/>
            <person name="Zheng W."/>
            <person name="Hao B."/>
            <person name="Liu S.-M."/>
            <person name="Wang W."/>
            <person name="Yuan L."/>
            <person name="Cao M."/>
            <person name="McDermott J."/>
            <person name="Samudrala R."/>
            <person name="Wang J."/>
            <person name="Wong G.K.-S."/>
            <person name="Yang H."/>
        </authorList>
    </citation>
    <scope>NUCLEOTIDE SEQUENCE [LARGE SCALE GENOMIC DNA]</scope>
    <source>
        <strain>cv. Nipponbare</strain>
    </source>
</reference>
<reference key="6">
    <citation type="journal article" date="2003" name="Science">
        <title>Collection, mapping, and annotation of over 28,000 cDNA clones from japonica rice.</title>
        <authorList>
            <consortium name="The rice full-length cDNA consortium"/>
        </authorList>
    </citation>
    <scope>NUCLEOTIDE SEQUENCE [LARGE SCALE MRNA]</scope>
    <source>
        <strain>cv. Nipponbare</strain>
    </source>
</reference>
<reference key="7">
    <citation type="journal article" date="2006" name="Mol. Genet. Genomics">
        <title>Genome-wide analysis of cyclin family in rice (Oryza sativa L.).</title>
        <authorList>
            <person name="La H."/>
            <person name="Li J."/>
            <person name="Ji Z."/>
            <person name="Cheng Y."/>
            <person name="Li X."/>
            <person name="Jiang S."/>
            <person name="Venkatesh P.N."/>
            <person name="Ramachandran S."/>
        </authorList>
    </citation>
    <scope>GENE FAMILY</scope>
    <scope>NOMENCLATURE</scope>
</reference>
<dbReference type="EMBL" id="AC084763">
    <property type="protein sequence ID" value="AAG60183.1"/>
    <property type="molecule type" value="Genomic_DNA"/>
</dbReference>
<dbReference type="EMBL" id="DP000086">
    <property type="protein sequence ID" value="AAP55040.1"/>
    <property type="molecule type" value="Genomic_DNA"/>
</dbReference>
<dbReference type="EMBL" id="AP008216">
    <property type="protein sequence ID" value="BAF27243.1"/>
    <property type="molecule type" value="Genomic_DNA"/>
</dbReference>
<dbReference type="EMBL" id="AP014966">
    <property type="protein sequence ID" value="BAT12088.1"/>
    <property type="molecule type" value="Genomic_DNA"/>
</dbReference>
<dbReference type="EMBL" id="CM000147">
    <property type="protein sequence ID" value="EAZ16997.1"/>
    <property type="molecule type" value="Genomic_DNA"/>
</dbReference>
<dbReference type="EMBL" id="AK107529">
    <property type="protein sequence ID" value="BAG98076.1"/>
    <property type="molecule type" value="mRNA"/>
</dbReference>
<dbReference type="RefSeq" id="XP_015613286.1">
    <property type="nucleotide sequence ID" value="XM_015757800.1"/>
</dbReference>
<dbReference type="SMR" id="Q7XC35"/>
<dbReference type="FunCoup" id="Q7XC35">
    <property type="interactions" value="20"/>
</dbReference>
<dbReference type="STRING" id="39947.Q7XC35"/>
<dbReference type="PaxDb" id="39947-Q7XC35"/>
<dbReference type="EnsemblPlants" id="Os10t0563900-01">
    <property type="protein sequence ID" value="Os10t0563900-01"/>
    <property type="gene ID" value="Os10g0563900"/>
</dbReference>
<dbReference type="Gramene" id="Os10t0563900-01">
    <property type="protein sequence ID" value="Os10t0563900-01"/>
    <property type="gene ID" value="Os10g0563900"/>
</dbReference>
<dbReference type="KEGG" id="dosa:Os10g0563900"/>
<dbReference type="eggNOG" id="KOG1674">
    <property type="taxonomic scope" value="Eukaryota"/>
</dbReference>
<dbReference type="HOGENOM" id="CLU_057371_1_1_1"/>
<dbReference type="InParanoid" id="Q7XC35"/>
<dbReference type="OMA" id="FQTYCAY"/>
<dbReference type="OrthoDB" id="337735at2759"/>
<dbReference type="Proteomes" id="UP000000763">
    <property type="component" value="Chromosome 10"/>
</dbReference>
<dbReference type="Proteomes" id="UP000007752">
    <property type="component" value="Chromosome 10"/>
</dbReference>
<dbReference type="Proteomes" id="UP000059680">
    <property type="component" value="Chromosome 10"/>
</dbReference>
<dbReference type="GO" id="GO:0019901">
    <property type="term" value="F:protein kinase binding"/>
    <property type="evidence" value="ECO:0007669"/>
    <property type="project" value="InterPro"/>
</dbReference>
<dbReference type="GO" id="GO:0051301">
    <property type="term" value="P:cell division"/>
    <property type="evidence" value="ECO:0007669"/>
    <property type="project" value="UniProtKB-KW"/>
</dbReference>
<dbReference type="Gene3D" id="1.10.472.10">
    <property type="entry name" value="Cyclin-like"/>
    <property type="match status" value="1"/>
</dbReference>
<dbReference type="InterPro" id="IPR036915">
    <property type="entry name" value="Cyclin-like_sf"/>
</dbReference>
<dbReference type="InterPro" id="IPR012389">
    <property type="entry name" value="Cyclin_P/U"/>
</dbReference>
<dbReference type="InterPro" id="IPR013922">
    <property type="entry name" value="Cyclin_PHO80-like"/>
</dbReference>
<dbReference type="PANTHER" id="PTHR15615">
    <property type="match status" value="1"/>
</dbReference>
<dbReference type="PANTHER" id="PTHR15615:SF91">
    <property type="entry name" value="CYCLIN-P4-1"/>
    <property type="match status" value="1"/>
</dbReference>
<dbReference type="Pfam" id="PF08613">
    <property type="entry name" value="Cyclin"/>
    <property type="match status" value="1"/>
</dbReference>
<dbReference type="PIRSF" id="PIRSF027110">
    <property type="entry name" value="PREG"/>
    <property type="match status" value="1"/>
</dbReference>
<dbReference type="SUPFAM" id="SSF47954">
    <property type="entry name" value="Cyclin-like"/>
    <property type="match status" value="1"/>
</dbReference>
<protein>
    <recommendedName>
        <fullName>Cyclin-P4-1</fullName>
        <shortName>CycP4;1</shortName>
    </recommendedName>
</protein>
<sequence length="212" mass="23366">MRTGEVAEAVPRVVAILSSLLQRVAERNDAAAAAAAVGEEAAAVSAFQGLTKPAISIGGYLERIFRFANCSPSCYVVAYIYLDRFLRRRPALAVDSFNVHRLLITSVLTAVKFVDDICYNNAYFARVGGISLMEMNYLEVDFLFGIAFDLNVTPAAFASYCAVLQSEMTYLEQPPAVDLPRLHCCPSDQDDAGCHHKQQQQQQQQQQHQLAV</sequence>
<evidence type="ECO:0000305" key="1"/>
<accession>Q7XC35</accession>
<accession>B7F0C9</accession>
<accession>Q9AY48</accession>
<organism>
    <name type="scientific">Oryza sativa subsp. japonica</name>
    <name type="common">Rice</name>
    <dbReference type="NCBI Taxonomy" id="39947"/>
    <lineage>
        <taxon>Eukaryota</taxon>
        <taxon>Viridiplantae</taxon>
        <taxon>Streptophyta</taxon>
        <taxon>Embryophyta</taxon>
        <taxon>Tracheophyta</taxon>
        <taxon>Spermatophyta</taxon>
        <taxon>Magnoliopsida</taxon>
        <taxon>Liliopsida</taxon>
        <taxon>Poales</taxon>
        <taxon>Poaceae</taxon>
        <taxon>BOP clade</taxon>
        <taxon>Oryzoideae</taxon>
        <taxon>Oryzeae</taxon>
        <taxon>Oryzinae</taxon>
        <taxon>Oryza</taxon>
        <taxon>Oryza sativa</taxon>
    </lineage>
</organism>
<proteinExistence type="evidence at transcript level"/>